<reference key="1">
    <citation type="journal article" date="1999" name="Gene">
        <title>A serine residue in the N-terminal acidic region of rat RPB6, one of the common subunits of RNA polymerases, is exclusively phosphorylated by casein kinase II in vitro.</title>
        <authorList>
            <person name="Kayukawa K."/>
            <person name="Makino Y."/>
            <person name="Yogosawa S."/>
            <person name="Tamura T."/>
        </authorList>
    </citation>
    <scope>NUCLEOTIDE SEQUENCE [MRNA]</scope>
    <scope>PHOSPHORYLATION AT SER-2</scope>
</reference>
<reference key="2">
    <citation type="journal article" date="2004" name="Genome Res.">
        <title>The status, quality, and expansion of the NIH full-length cDNA project: the Mammalian Gene Collection (MGC).</title>
        <authorList>
            <consortium name="The MGC Project Team"/>
        </authorList>
    </citation>
    <scope>NUCLEOTIDE SEQUENCE [LARGE SCALE MRNA]</scope>
    <source>
        <tissue>Heart</tissue>
    </source>
</reference>
<reference key="3">
    <citation type="journal article" date="2012" name="Nat. Commun.">
        <title>Quantitative maps of protein phosphorylation sites across 14 different rat organs and tissues.</title>
        <authorList>
            <person name="Lundby A."/>
            <person name="Secher A."/>
            <person name="Lage K."/>
            <person name="Nordsborg N.B."/>
            <person name="Dmytriyev A."/>
            <person name="Lundby C."/>
            <person name="Olsen J.V."/>
        </authorList>
    </citation>
    <scope>PHOSPHORYLATION [LARGE SCALE ANALYSIS] AT SER-2</scope>
    <scope>IDENTIFICATION BY MASS SPECTROMETRY [LARGE SCALE ANALYSIS]</scope>
</reference>
<accession>O88828</accession>
<organism>
    <name type="scientific">Rattus norvegicus</name>
    <name type="common">Rat</name>
    <dbReference type="NCBI Taxonomy" id="10116"/>
    <lineage>
        <taxon>Eukaryota</taxon>
        <taxon>Metazoa</taxon>
        <taxon>Chordata</taxon>
        <taxon>Craniata</taxon>
        <taxon>Vertebrata</taxon>
        <taxon>Euteleostomi</taxon>
        <taxon>Mammalia</taxon>
        <taxon>Eutheria</taxon>
        <taxon>Euarchontoglires</taxon>
        <taxon>Glires</taxon>
        <taxon>Rodentia</taxon>
        <taxon>Myomorpha</taxon>
        <taxon>Muroidea</taxon>
        <taxon>Muridae</taxon>
        <taxon>Murinae</taxon>
        <taxon>Rattus</taxon>
    </lineage>
</organism>
<comment type="function">
    <text evidence="1 2">DNA-dependent RNA polymerase catalyzes the transcription of DNA into RNA using the four ribonucleoside triphosphates as substrates. Common component of RNA polymerases I, II, and III which synthesize ribosomal RNA precursors, mRNA precursors and many functional non-coding RNAs, and small RNAs, such as 5S rRNA and tRNAs, respectively. Pol II is the central component of the basal RNA polymerase II transcription machinery. Pols are composed of mobile elements that move relative to each other. In Pol II, POLR2F/RPABC2 is part of the clamp element and together with parts of POLR2A/RPB1 and POLR2B/RPB2 forms a pocket to which the POLR2D/RPB4-POLR2G/RPB7 subcomplex binds.</text>
</comment>
<comment type="subunit">
    <text evidence="2">Component of the RNA polymerase I (Pol I), RNA polymerase II (Pol II) and RNA polymerase III (Pol III) complexes consisting of at least 13, 12 and 17 subunits, respectively (By similarity). Pol I complex consists of a ten-subunit catalytic core composed of POLR1A/RPA1, POLR1B/RPA2, POLR1C/RPAC1, POLR1D/RPAC2, POLR1H/RPA12, POLR2E/RPABC1, POLR2F/RPABC2, POLR2H/RPABC3, POLR2K/RPABC4 and POLR2L/RPABC5; a mobile stalk subunit POLR1F/RPA43 protruding from the core and additional subunits homologous to general transcription factors POLR1E/RPA49 and POLR1G/RPA34. Part of Pol I pre-initiation complex (PIC), in which Pol I core assembles with RRN3 and promoter-bound UTBF and SL1/TIF-IB complex (By similarity). Pol II complex contains a ten-subunit catalytic core composed of POLR2A/RPB1, POLR2B/RPB2, POLR2C/RPB3, POLR2I/RPB9, POLR2J/RPB11, POLR2E/RPABC1, POLR2F/RPABC2, POLR2H/RPABC3, POLR2K/RPABC4 and POLR2L/RPABC5 and a mobile stalk composed of two subunits POLR2D/RPB4 and POLR2G/RPB7. Part of Pol II(G) complex, in which Pol II core associates with an additional subunit POLR2M; unlike conventional Pol II, Pol II(G) functions as a transcriptional repressor. Part of TBP-based Pol II pre-initiation complex (PIC), in which Pol II core assembles with general transcription factors and other specific initiation factors including GTF2E1, GTF2E2, GTF2F1, GTF2F2, TCEA1, ERCC2, ERCC3, GTF2H2, GTF2H3, GTF2H4, GTF2H5, GTF2A1, GTF2A2, GTF2B and TBP; this large multi-subunit PIC complex mediates DNA unwinding and targets Pol II core to the transcription start site where the first phosphodiester bond forms. Pol III complex consists of a ten-subunit catalytic core composed of POLR3A/RPC1, POLR3B/RPC2, POLR1C/RPAC1, POLR1D/RPAC2, POLR3K/RPC10, POLR2E/RPABC1, POLR2F/RPABC2, POLR2H/RPABC3, POLR2K/RPABC4 and POLR2L/RPABC5; a mobile stalk composed of two subunits POLR3H/RPC8 and CRCP/RPC9, protruding from the core and functioning primarily in transcription initiation; and additional subunits homologous to general transcription factors of the RNA polymerase II machinery, POLR3C/RPC3-POLR3F/RPC6-POLR3G/RPC7 heterotrimer required for transcription initiation and POLR3D/RPC4-POLR3E/RPC5 heterodimer involved in both transcription initiation and termination.</text>
</comment>
<comment type="subcellular location">
    <subcellularLocation>
        <location evidence="2">Nucleus</location>
    </subcellularLocation>
    <subcellularLocation>
        <location evidence="2">Nucleus</location>
        <location evidence="2">Nucleolus</location>
    </subcellularLocation>
</comment>
<comment type="similarity">
    <text evidence="5">Belongs to the archaeal Rpo6/eukaryotic RPB6 RNA polymerase subunit family.</text>
</comment>
<sequence>MSDNEDNFDGDDFDDVEEDEGLDDLENAEEEGQENVEILPSGERPQANQKRITTPYMTKYERARVLGTRALQIAMCAPVMVELEGETDPLLIAMKELKARKIPIIIRRYLPDGSYEDWGVDELIISD</sequence>
<dbReference type="EMBL" id="AB017711">
    <property type="protein sequence ID" value="BAA33414.1"/>
    <property type="molecule type" value="mRNA"/>
</dbReference>
<dbReference type="EMBL" id="BC083552">
    <property type="protein sequence ID" value="AAH83552.1"/>
    <property type="molecule type" value="mRNA"/>
</dbReference>
<dbReference type="RefSeq" id="NP_112625.1">
    <property type="nucleotide sequence ID" value="NM_031335.3"/>
</dbReference>
<dbReference type="SMR" id="O88828"/>
<dbReference type="BioGRID" id="249722">
    <property type="interactions" value="1"/>
</dbReference>
<dbReference type="FunCoup" id="O88828">
    <property type="interactions" value="1381"/>
</dbReference>
<dbReference type="STRING" id="10116.ENSRNOP00000015009"/>
<dbReference type="iPTMnet" id="O88828"/>
<dbReference type="PhosphoSitePlus" id="O88828"/>
<dbReference type="PaxDb" id="10116-ENSRNOP00000015009"/>
<dbReference type="Ensembl" id="ENSRNOT00000015009.7">
    <property type="protein sequence ID" value="ENSRNOP00000015009.3"/>
    <property type="gene ID" value="ENSRNOG00000011214.7"/>
</dbReference>
<dbReference type="GeneID" id="83503"/>
<dbReference type="KEGG" id="rno:83503"/>
<dbReference type="UCSC" id="RGD:708567">
    <property type="organism name" value="rat"/>
</dbReference>
<dbReference type="AGR" id="RGD:708567"/>
<dbReference type="CTD" id="5435"/>
<dbReference type="RGD" id="708567">
    <property type="gene designation" value="Polr2f"/>
</dbReference>
<dbReference type="eggNOG" id="KOG3405">
    <property type="taxonomic scope" value="Eukaryota"/>
</dbReference>
<dbReference type="GeneTree" id="ENSGT00390000010415"/>
<dbReference type="HOGENOM" id="CLU_112527_2_0_1"/>
<dbReference type="InParanoid" id="O88828"/>
<dbReference type="OMA" id="TYMTKYE"/>
<dbReference type="OrthoDB" id="259769at2759"/>
<dbReference type="PhylomeDB" id="O88828"/>
<dbReference type="TreeFam" id="TF103041"/>
<dbReference type="Reactome" id="R-RNO-112382">
    <property type="pathway name" value="Formation of RNA Pol II elongation complex"/>
</dbReference>
<dbReference type="Reactome" id="R-RNO-113418">
    <property type="pathway name" value="Formation of the Early Elongation Complex"/>
</dbReference>
<dbReference type="Reactome" id="R-RNO-5250924">
    <property type="pathway name" value="B-WICH complex positively regulates rRNA expression"/>
</dbReference>
<dbReference type="Reactome" id="R-RNO-5578749">
    <property type="pathway name" value="Transcriptional regulation by small RNAs"/>
</dbReference>
<dbReference type="Reactome" id="R-RNO-674695">
    <property type="pathway name" value="RNA Polymerase II Pre-transcription Events"/>
</dbReference>
<dbReference type="Reactome" id="R-RNO-6781823">
    <property type="pathway name" value="Formation of TC-NER Pre-Incision Complex"/>
</dbReference>
<dbReference type="Reactome" id="R-RNO-6782135">
    <property type="pathway name" value="Dual incision in TC-NER"/>
</dbReference>
<dbReference type="Reactome" id="R-RNO-6782210">
    <property type="pathway name" value="Gap-filling DNA repair synthesis and ligation in TC-NER"/>
</dbReference>
<dbReference type="Reactome" id="R-RNO-6796648">
    <property type="pathway name" value="TP53 Regulates Transcription of DNA Repair Genes"/>
</dbReference>
<dbReference type="Reactome" id="R-RNO-6803529">
    <property type="pathway name" value="FGFR2 alternative splicing"/>
</dbReference>
<dbReference type="Reactome" id="R-RNO-6807505">
    <property type="pathway name" value="RNA polymerase II transcribes snRNA genes"/>
</dbReference>
<dbReference type="Reactome" id="R-RNO-72086">
    <property type="pathway name" value="mRNA Capping"/>
</dbReference>
<dbReference type="Reactome" id="R-RNO-72163">
    <property type="pathway name" value="mRNA Splicing - Major Pathway"/>
</dbReference>
<dbReference type="Reactome" id="R-RNO-72165">
    <property type="pathway name" value="mRNA Splicing - Minor Pathway"/>
</dbReference>
<dbReference type="Reactome" id="R-RNO-72203">
    <property type="pathway name" value="Processing of Capped Intron-Containing Pre-mRNA"/>
</dbReference>
<dbReference type="Reactome" id="R-RNO-73762">
    <property type="pathway name" value="RNA Polymerase I Transcription Initiation"/>
</dbReference>
<dbReference type="Reactome" id="R-RNO-73772">
    <property type="pathway name" value="RNA Polymerase I Promoter Escape"/>
</dbReference>
<dbReference type="Reactome" id="R-RNO-73776">
    <property type="pathway name" value="RNA Polymerase II Promoter Escape"/>
</dbReference>
<dbReference type="Reactome" id="R-RNO-73779">
    <property type="pathway name" value="RNA Polymerase II Transcription Pre-Initiation And Promoter Opening"/>
</dbReference>
<dbReference type="Reactome" id="R-RNO-73863">
    <property type="pathway name" value="RNA Polymerase I Transcription Termination"/>
</dbReference>
<dbReference type="Reactome" id="R-RNO-75953">
    <property type="pathway name" value="RNA Polymerase II Transcription Initiation"/>
</dbReference>
<dbReference type="Reactome" id="R-RNO-75955">
    <property type="pathway name" value="RNA Polymerase II Transcription Elongation"/>
</dbReference>
<dbReference type="Reactome" id="R-RNO-76042">
    <property type="pathway name" value="RNA Polymerase II Transcription Initiation And Promoter Clearance"/>
</dbReference>
<dbReference type="Reactome" id="R-RNO-76061">
    <property type="pathway name" value="RNA Polymerase III Transcription Initiation From Type 1 Promoter"/>
</dbReference>
<dbReference type="Reactome" id="R-RNO-76066">
    <property type="pathway name" value="RNA Polymerase III Transcription Initiation From Type 2 Promoter"/>
</dbReference>
<dbReference type="Reactome" id="R-RNO-76071">
    <property type="pathway name" value="RNA Polymerase III Transcription Initiation From Type 3 Promoter"/>
</dbReference>
<dbReference type="Reactome" id="R-RNO-77075">
    <property type="pathway name" value="RNA Pol II CTD phosphorylation and interaction with CE"/>
</dbReference>
<dbReference type="Reactome" id="R-RNO-9018519">
    <property type="pathway name" value="Estrogen-dependent gene expression"/>
</dbReference>
<dbReference type="PRO" id="PR:O88828"/>
<dbReference type="Proteomes" id="UP000002494">
    <property type="component" value="Chromosome 7"/>
</dbReference>
<dbReference type="Bgee" id="ENSRNOG00000011214">
    <property type="expression patterns" value="Expressed in heart and 20 other cell types or tissues"/>
</dbReference>
<dbReference type="GO" id="GO:0001650">
    <property type="term" value="C:fibrillar center"/>
    <property type="evidence" value="ECO:0007669"/>
    <property type="project" value="Ensembl"/>
</dbReference>
<dbReference type="GO" id="GO:0005634">
    <property type="term" value="C:nucleus"/>
    <property type="evidence" value="ECO:0000250"/>
    <property type="project" value="UniProtKB"/>
</dbReference>
<dbReference type="GO" id="GO:0005736">
    <property type="term" value="C:RNA polymerase I complex"/>
    <property type="evidence" value="ECO:0000266"/>
    <property type="project" value="RGD"/>
</dbReference>
<dbReference type="GO" id="GO:0005665">
    <property type="term" value="C:RNA polymerase II, core complex"/>
    <property type="evidence" value="ECO:0000250"/>
    <property type="project" value="UniProtKB"/>
</dbReference>
<dbReference type="GO" id="GO:0005666">
    <property type="term" value="C:RNA polymerase III complex"/>
    <property type="evidence" value="ECO:0000266"/>
    <property type="project" value="RGD"/>
</dbReference>
<dbReference type="GO" id="GO:0003677">
    <property type="term" value="F:DNA binding"/>
    <property type="evidence" value="ECO:0007669"/>
    <property type="project" value="InterPro"/>
</dbReference>
<dbReference type="GO" id="GO:0003899">
    <property type="term" value="F:DNA-directed RNA polymerase activity"/>
    <property type="evidence" value="ECO:0000304"/>
    <property type="project" value="RGD"/>
</dbReference>
<dbReference type="GO" id="GO:0006360">
    <property type="term" value="P:transcription by RNA polymerase I"/>
    <property type="evidence" value="ECO:0000318"/>
    <property type="project" value="GO_Central"/>
</dbReference>
<dbReference type="GO" id="GO:0006366">
    <property type="term" value="P:transcription by RNA polymerase II"/>
    <property type="evidence" value="ECO:0000250"/>
    <property type="project" value="UniProtKB"/>
</dbReference>
<dbReference type="GO" id="GO:0006383">
    <property type="term" value="P:transcription by RNA polymerase III"/>
    <property type="evidence" value="ECO:0000304"/>
    <property type="project" value="RGD"/>
</dbReference>
<dbReference type="GO" id="GO:0042797">
    <property type="term" value="P:tRNA transcription by RNA polymerase III"/>
    <property type="evidence" value="ECO:0000318"/>
    <property type="project" value="GO_Central"/>
</dbReference>
<dbReference type="FunFam" id="3.90.940.10:FF:000003">
    <property type="entry name" value="DNA-directed RNA polymerases I, II, and III subunit RPABC2"/>
    <property type="match status" value="1"/>
</dbReference>
<dbReference type="Gene3D" id="3.90.940.10">
    <property type="match status" value="1"/>
</dbReference>
<dbReference type="InterPro" id="IPR020708">
    <property type="entry name" value="DNA-dir_RNA_polK_14-18kDa_CS"/>
</dbReference>
<dbReference type="InterPro" id="IPR006110">
    <property type="entry name" value="Pol_omega/Rpo6/RPB6"/>
</dbReference>
<dbReference type="InterPro" id="IPR028363">
    <property type="entry name" value="RPB6"/>
</dbReference>
<dbReference type="InterPro" id="IPR036161">
    <property type="entry name" value="RPB6/omega-like_sf"/>
</dbReference>
<dbReference type="InterPro" id="IPR006111">
    <property type="entry name" value="Rpo6/Rpb6"/>
</dbReference>
<dbReference type="NCBIfam" id="NF002208">
    <property type="entry name" value="PRK01099.1-3"/>
    <property type="match status" value="1"/>
</dbReference>
<dbReference type="PANTHER" id="PTHR47227">
    <property type="entry name" value="DNA-DIRECTED RNA POLYMERASE SUBUNIT K"/>
    <property type="match status" value="1"/>
</dbReference>
<dbReference type="PANTHER" id="PTHR47227:SF5">
    <property type="entry name" value="DNA-DIRECTED RNA POLYMERASES I, II, AND III SUBUNIT RPABC2"/>
    <property type="match status" value="1"/>
</dbReference>
<dbReference type="Pfam" id="PF01192">
    <property type="entry name" value="RNA_pol_Rpb6"/>
    <property type="match status" value="1"/>
</dbReference>
<dbReference type="PIRSF" id="PIRSF500154">
    <property type="entry name" value="RPB6"/>
    <property type="match status" value="1"/>
</dbReference>
<dbReference type="PIRSF" id="PIRSF000778">
    <property type="entry name" value="RpoK/RPB6"/>
    <property type="match status" value="1"/>
</dbReference>
<dbReference type="SMART" id="SM01409">
    <property type="entry name" value="RNA_pol_Rpb6"/>
    <property type="match status" value="1"/>
</dbReference>
<dbReference type="SUPFAM" id="SSF63562">
    <property type="entry name" value="RPB6/omega subunit-like"/>
    <property type="match status" value="1"/>
</dbReference>
<dbReference type="PROSITE" id="PS01111">
    <property type="entry name" value="RNA_POL_K_14KD"/>
    <property type="match status" value="1"/>
</dbReference>
<name>RPAB2_RAT</name>
<proteinExistence type="evidence at protein level"/>
<keyword id="KW-0007">Acetylation</keyword>
<keyword id="KW-0240">DNA-directed RNA polymerase</keyword>
<keyword id="KW-0539">Nucleus</keyword>
<keyword id="KW-0597">Phosphoprotein</keyword>
<keyword id="KW-1185">Reference proteome</keyword>
<keyword id="KW-0804">Transcription</keyword>
<feature type="initiator methionine" description="Removed" evidence="2">
    <location>
        <position position="1"/>
    </location>
</feature>
<feature type="chain" id="PRO_0000133802" description="DNA-directed RNA polymerases I, II, and III subunit RPABC2">
    <location>
        <begin position="2"/>
        <end position="127"/>
    </location>
</feature>
<feature type="region of interest" description="Disordered" evidence="3">
    <location>
        <begin position="1"/>
        <end position="53"/>
    </location>
</feature>
<feature type="compositionally biased region" description="Acidic residues" evidence="3">
    <location>
        <begin position="1"/>
        <end position="34"/>
    </location>
</feature>
<feature type="modified residue" description="N-acetylserine" evidence="2">
    <location>
        <position position="2"/>
    </location>
</feature>
<feature type="modified residue" description="Phosphoserine; by CK2" evidence="4 7">
    <location>
        <position position="2"/>
    </location>
</feature>
<protein>
    <recommendedName>
        <fullName>DNA-directed RNA polymerases I, II, and III subunit RPABC2</fullName>
        <shortName>RNA polymerases I, II, and III subunit ABC2</shortName>
    </recommendedName>
    <alternativeName>
        <fullName>DNA-directed RNA polymerase II subunit F</fullName>
    </alternativeName>
    <alternativeName>
        <fullName>RPB6 homolog</fullName>
    </alternativeName>
</protein>
<evidence type="ECO:0000250" key="1">
    <source>
        <dbReference type="UniProtKB" id="P20435"/>
    </source>
</evidence>
<evidence type="ECO:0000250" key="2">
    <source>
        <dbReference type="UniProtKB" id="P61218"/>
    </source>
</evidence>
<evidence type="ECO:0000256" key="3">
    <source>
        <dbReference type="SAM" id="MobiDB-lite"/>
    </source>
</evidence>
<evidence type="ECO:0000269" key="4">
    <source>
    </source>
</evidence>
<evidence type="ECO:0000305" key="5"/>
<evidence type="ECO:0000312" key="6">
    <source>
        <dbReference type="RGD" id="708567"/>
    </source>
</evidence>
<evidence type="ECO:0007744" key="7">
    <source>
    </source>
</evidence>
<gene>
    <name evidence="6" type="primary">Polr2f</name>
</gene>